<organism>
    <name type="scientific">Saccharomyces cerevisiae (strain ATCC 204508 / S288c)</name>
    <name type="common">Baker's yeast</name>
    <dbReference type="NCBI Taxonomy" id="559292"/>
    <lineage>
        <taxon>Eukaryota</taxon>
        <taxon>Fungi</taxon>
        <taxon>Dikarya</taxon>
        <taxon>Ascomycota</taxon>
        <taxon>Saccharomycotina</taxon>
        <taxon>Saccharomycetes</taxon>
        <taxon>Saccharomycetales</taxon>
        <taxon>Saccharomycetaceae</taxon>
        <taxon>Saccharomyces</taxon>
    </lineage>
</organism>
<name>YCP2_YEAST</name>
<reference key="1">
    <citation type="journal article" date="1991" name="Yeast">
        <title>Sequence of the CDC10 region at chromosome III of Saccharomyces cerevisiae.</title>
        <authorList>
            <person name="Steensma H.Y."/>
            <person name="van der Aart Q.J.M."/>
        </authorList>
    </citation>
    <scope>NUCLEOTIDE SEQUENCE [GENOMIC DNA]</scope>
</reference>
<reference key="2">
    <citation type="journal article" date="1992" name="Nature">
        <title>The complete DNA sequence of yeast chromosome III.</title>
        <authorList>
            <person name="Oliver S.G."/>
            <person name="van der Aart Q.J.M."/>
            <person name="Agostoni-Carbone M.L."/>
            <person name="Aigle M."/>
            <person name="Alberghina L."/>
            <person name="Alexandraki D."/>
            <person name="Antoine G."/>
            <person name="Anwar R."/>
            <person name="Ballesta J.P.G."/>
            <person name="Benit P."/>
            <person name="Berben G."/>
            <person name="Bergantino E."/>
            <person name="Biteau N."/>
            <person name="Bolle P.-A."/>
            <person name="Bolotin-Fukuhara M."/>
            <person name="Brown A."/>
            <person name="Brown A.J.P."/>
            <person name="Buhler J.-M."/>
            <person name="Carcano C."/>
            <person name="Carignani G."/>
            <person name="Cederberg H."/>
            <person name="Chanet R."/>
            <person name="Contreras R."/>
            <person name="Crouzet M."/>
            <person name="Daignan-Fornier B."/>
            <person name="Defoor E."/>
            <person name="Delgado M.D."/>
            <person name="Demolder J."/>
            <person name="Doira C."/>
            <person name="Dubois E."/>
            <person name="Dujon B."/>
            <person name="Duesterhoeft A."/>
            <person name="Erdmann D."/>
            <person name="Esteban M."/>
            <person name="Fabre F."/>
            <person name="Fairhead C."/>
            <person name="Faye G."/>
            <person name="Feldmann H."/>
            <person name="Fiers W."/>
            <person name="Francingues-Gaillard M.-C."/>
            <person name="Franco L."/>
            <person name="Frontali L."/>
            <person name="Fukuhara H."/>
            <person name="Fuller L.J."/>
            <person name="Galland P."/>
            <person name="Gent M.E."/>
            <person name="Gigot D."/>
            <person name="Gilliquet V."/>
            <person name="Glansdorff N."/>
            <person name="Goffeau A."/>
            <person name="Grenson M."/>
            <person name="Grisanti P."/>
            <person name="Grivell L.A."/>
            <person name="de Haan M."/>
            <person name="Haasemann M."/>
            <person name="Hatat D."/>
            <person name="Hoenicka J."/>
            <person name="Hegemann J.H."/>
            <person name="Herbert C.J."/>
            <person name="Hilger F."/>
            <person name="Hohmann S."/>
            <person name="Hollenberg C.P."/>
            <person name="Huse K."/>
            <person name="Iborra F."/>
            <person name="Indge K.J."/>
            <person name="Isono K."/>
            <person name="Jacq C."/>
            <person name="Jacquet M."/>
            <person name="James C.M."/>
            <person name="Jauniaux J.-C."/>
            <person name="Jia Y."/>
            <person name="Jimenez A."/>
            <person name="Kelly A."/>
            <person name="Kleinhans U."/>
            <person name="Kreisl P."/>
            <person name="Lanfranchi G."/>
            <person name="Lewis C."/>
            <person name="van der Linden C.G."/>
            <person name="Lucchini G."/>
            <person name="Lutzenkirchen K."/>
            <person name="Maat M.J."/>
            <person name="Mallet L."/>
            <person name="Mannhaupt G."/>
            <person name="Martegani E."/>
            <person name="Mathieu A."/>
            <person name="Maurer C.T.C."/>
            <person name="McConnell D."/>
            <person name="McKee R.A."/>
            <person name="Messenguy F."/>
            <person name="Mewes H.-W."/>
            <person name="Molemans F."/>
            <person name="Montague M.A."/>
            <person name="Muzi Falconi M."/>
            <person name="Navas L."/>
            <person name="Newlon C.S."/>
            <person name="Noone D."/>
            <person name="Pallier C."/>
            <person name="Panzeri L."/>
            <person name="Pearson B.M."/>
            <person name="Perea J."/>
            <person name="Philippsen P."/>
            <person name="Pierard A."/>
            <person name="Planta R.J."/>
            <person name="Plevani P."/>
            <person name="Poetsch B."/>
            <person name="Pohl F.M."/>
            <person name="Purnelle B."/>
            <person name="Ramezani Rad M."/>
            <person name="Rasmussen S.W."/>
            <person name="Raynal A."/>
            <person name="Remacha M.A."/>
            <person name="Richterich P."/>
            <person name="Roberts A.B."/>
            <person name="Rodriguez F."/>
            <person name="Sanz E."/>
            <person name="Schaaff-Gerstenschlaeger I."/>
            <person name="Scherens B."/>
            <person name="Schweitzer B."/>
            <person name="Shu Y."/>
            <person name="Skala J."/>
            <person name="Slonimski P.P."/>
            <person name="Sor F."/>
            <person name="Soustelle C."/>
            <person name="Spiegelberg R."/>
            <person name="Stateva L.I."/>
            <person name="Steensma H.Y."/>
            <person name="Steiner S."/>
            <person name="Thierry A."/>
            <person name="Thireos G."/>
            <person name="Tzermia M."/>
            <person name="Urrestarazu L.A."/>
            <person name="Valle G."/>
            <person name="Vetter I."/>
            <person name="van Vliet-Reedijk J.C."/>
            <person name="Voet M."/>
            <person name="Volckaert G."/>
            <person name="Vreken P."/>
            <person name="Wang H."/>
            <person name="Warmington J.R."/>
            <person name="von Wettstein D."/>
            <person name="Wicksteed B.L."/>
            <person name="Wilson C."/>
            <person name="Wurst H."/>
            <person name="Xu G."/>
            <person name="Yoshikawa A."/>
            <person name="Zimmermann F.K."/>
            <person name="Sgouros J.G."/>
        </authorList>
    </citation>
    <scope>NUCLEOTIDE SEQUENCE [LARGE SCALE GENOMIC DNA]</scope>
    <source>
        <strain>ATCC 204508 / S288c</strain>
    </source>
</reference>
<reference key="3">
    <citation type="journal article" date="2014" name="G3 (Bethesda)">
        <title>The reference genome sequence of Saccharomyces cerevisiae: Then and now.</title>
        <authorList>
            <person name="Engel S.R."/>
            <person name="Dietrich F.S."/>
            <person name="Fisk D.G."/>
            <person name="Binkley G."/>
            <person name="Balakrishnan R."/>
            <person name="Costanzo M.C."/>
            <person name="Dwight S.S."/>
            <person name="Hitz B.C."/>
            <person name="Karra K."/>
            <person name="Nash R.S."/>
            <person name="Weng S."/>
            <person name="Wong E.D."/>
            <person name="Lloyd P."/>
            <person name="Skrzypek M.S."/>
            <person name="Miyasato S.R."/>
            <person name="Simison M."/>
            <person name="Cherry J.M."/>
        </authorList>
    </citation>
    <scope>GENOME REANNOTATION</scope>
    <source>
        <strain>ATCC 204508 / S288c</strain>
    </source>
</reference>
<reference key="4">
    <citation type="journal article" date="2007" name="Genome Res.">
        <title>Approaching a complete repository of sequence-verified protein-encoding clones for Saccharomyces cerevisiae.</title>
        <authorList>
            <person name="Hu Y."/>
            <person name="Rolfs A."/>
            <person name="Bhullar B."/>
            <person name="Murthy T.V.S."/>
            <person name="Zhu C."/>
            <person name="Berger M.F."/>
            <person name="Camargo A.A."/>
            <person name="Kelley F."/>
            <person name="McCarron S."/>
            <person name="Jepson D."/>
            <person name="Richardson A."/>
            <person name="Raphael J."/>
            <person name="Moreira D."/>
            <person name="Taycher E."/>
            <person name="Zuo D."/>
            <person name="Mohr S."/>
            <person name="Kane M.F."/>
            <person name="Williamson J."/>
            <person name="Simpson A.J.G."/>
            <person name="Bulyk M.L."/>
            <person name="Harlow E."/>
            <person name="Marsischky G."/>
            <person name="Kolodner R.D."/>
            <person name="LaBaer J."/>
        </authorList>
    </citation>
    <scope>NUCLEOTIDE SEQUENCE [GENOMIC DNA]</scope>
    <source>
        <strain>ATCC 204508 / S288c</strain>
    </source>
</reference>
<keyword id="KW-1185">Reference proteome</keyword>
<proteinExistence type="predicted"/>
<protein>
    <recommendedName>
        <fullName>Uncharacterized protein YCR001W</fullName>
    </recommendedName>
</protein>
<sequence length="104" mass="12514">MLYLLKKLKHIDSYGESNLSMFYLKFYCPWKLCPLLPILYGRNKSVQNAWSCHKLHRFIDFPTPSANMNFFFFIRVCYGTVSLFISTFLKKISFFIYVNFTVYF</sequence>
<gene>
    <name type="ordered locus">YCR001W</name>
    <name type="ORF">YCR021</name>
    <name type="ORF">YCR1W</name>
</gene>
<feature type="chain" id="PRO_0000202559" description="Uncharacterized protein YCR001W">
    <location>
        <begin position="1"/>
        <end position="104"/>
    </location>
</feature>
<dbReference type="EMBL" id="S48552">
    <property type="protein sequence ID" value="AAD13855.1"/>
    <property type="molecule type" value="Genomic_DNA"/>
</dbReference>
<dbReference type="EMBL" id="X59720">
    <property type="protein sequence ID" value="CAA42338.1"/>
    <property type="molecule type" value="Genomic_DNA"/>
</dbReference>
<dbReference type="EMBL" id="AY558146">
    <property type="protein sequence ID" value="AAS56472.1"/>
    <property type="molecule type" value="Genomic_DNA"/>
</dbReference>
<dbReference type="EMBL" id="BK006937">
    <property type="protein sequence ID" value="DAA80268.1"/>
    <property type="molecule type" value="Genomic_DNA"/>
</dbReference>
<dbReference type="PIR" id="S19430">
    <property type="entry name" value="S19430"/>
</dbReference>
<dbReference type="RefSeq" id="NP_001335748.1">
    <property type="nucleotide sequence ID" value="NM_001348893.1"/>
</dbReference>
<dbReference type="DIP" id="DIP-4985N"/>
<dbReference type="FunCoup" id="P25347">
    <property type="interactions" value="25"/>
</dbReference>
<dbReference type="IntAct" id="P25347">
    <property type="interactions" value="10"/>
</dbReference>
<dbReference type="STRING" id="4932.YCR001W"/>
<dbReference type="PaxDb" id="4932-YCR001W"/>
<dbReference type="EnsemblFungi" id="YCR001W_mRNA">
    <property type="protein sequence ID" value="YCR001W"/>
    <property type="gene ID" value="YCR001W"/>
</dbReference>
<dbReference type="GeneID" id="850357"/>
<dbReference type="AGR" id="SGD:S000000594"/>
<dbReference type="SGD" id="S000000594">
    <property type="gene designation" value="YCR001W"/>
</dbReference>
<dbReference type="eggNOG" id="KOG0475">
    <property type="taxonomic scope" value="Eukaryota"/>
</dbReference>
<dbReference type="HOGENOM" id="CLU_2252169_0_0_1"/>
<dbReference type="InParanoid" id="P25347"/>
<dbReference type="PRO" id="PR:P25347"/>
<dbReference type="Proteomes" id="UP000002311">
    <property type="component" value="Chromosome III"/>
</dbReference>
<dbReference type="RNAct" id="P25347">
    <property type="molecule type" value="protein"/>
</dbReference>
<accession>P25347</accession>
<accession>A0A1S0T048</accession>